<proteinExistence type="inferred from homology"/>
<protein>
    <recommendedName>
        <fullName evidence="1">Flagellar hook-basal body complex protein FliE</fullName>
    </recommendedName>
</protein>
<comment type="subcellular location">
    <subcellularLocation>
        <location evidence="1">Bacterial flagellum basal body</location>
    </subcellularLocation>
</comment>
<comment type="similarity">
    <text evidence="1">Belongs to the FliE family.</text>
</comment>
<evidence type="ECO:0000255" key="1">
    <source>
        <dbReference type="HAMAP-Rule" id="MF_00724"/>
    </source>
</evidence>
<dbReference type="EMBL" id="CP001120">
    <property type="protein sequence ID" value="ACF69128.1"/>
    <property type="molecule type" value="Genomic_DNA"/>
</dbReference>
<dbReference type="RefSeq" id="WP_000719036.1">
    <property type="nucleotide sequence ID" value="NC_011083.1"/>
</dbReference>
<dbReference type="SMR" id="B4T8S2"/>
<dbReference type="KEGG" id="seh:SeHA_C2183"/>
<dbReference type="HOGENOM" id="CLU_147249_0_2_6"/>
<dbReference type="Proteomes" id="UP000001866">
    <property type="component" value="Chromosome"/>
</dbReference>
<dbReference type="GO" id="GO:0009425">
    <property type="term" value="C:bacterial-type flagellum basal body"/>
    <property type="evidence" value="ECO:0007669"/>
    <property type="project" value="UniProtKB-SubCell"/>
</dbReference>
<dbReference type="GO" id="GO:0003774">
    <property type="term" value="F:cytoskeletal motor activity"/>
    <property type="evidence" value="ECO:0007669"/>
    <property type="project" value="InterPro"/>
</dbReference>
<dbReference type="GO" id="GO:0005198">
    <property type="term" value="F:structural molecule activity"/>
    <property type="evidence" value="ECO:0007669"/>
    <property type="project" value="InterPro"/>
</dbReference>
<dbReference type="GO" id="GO:0071973">
    <property type="term" value="P:bacterial-type flagellum-dependent cell motility"/>
    <property type="evidence" value="ECO:0007669"/>
    <property type="project" value="InterPro"/>
</dbReference>
<dbReference type="HAMAP" id="MF_00724">
    <property type="entry name" value="FliE"/>
    <property type="match status" value="1"/>
</dbReference>
<dbReference type="InterPro" id="IPR001624">
    <property type="entry name" value="FliE"/>
</dbReference>
<dbReference type="NCBIfam" id="TIGR00205">
    <property type="entry name" value="fliE"/>
    <property type="match status" value="1"/>
</dbReference>
<dbReference type="PANTHER" id="PTHR34653">
    <property type="match status" value="1"/>
</dbReference>
<dbReference type="PANTHER" id="PTHR34653:SF1">
    <property type="entry name" value="FLAGELLAR HOOK-BASAL BODY COMPLEX PROTEIN FLIE"/>
    <property type="match status" value="1"/>
</dbReference>
<dbReference type="Pfam" id="PF02049">
    <property type="entry name" value="FliE"/>
    <property type="match status" value="1"/>
</dbReference>
<dbReference type="PRINTS" id="PR01006">
    <property type="entry name" value="FLGHOOKFLIE"/>
</dbReference>
<organism>
    <name type="scientific">Salmonella heidelberg (strain SL476)</name>
    <dbReference type="NCBI Taxonomy" id="454169"/>
    <lineage>
        <taxon>Bacteria</taxon>
        <taxon>Pseudomonadati</taxon>
        <taxon>Pseudomonadota</taxon>
        <taxon>Gammaproteobacteria</taxon>
        <taxon>Enterobacterales</taxon>
        <taxon>Enterobacteriaceae</taxon>
        <taxon>Salmonella</taxon>
    </lineage>
</organism>
<accession>B4T8S2</accession>
<name>FLIE_SALHS</name>
<reference key="1">
    <citation type="journal article" date="2011" name="J. Bacteriol.">
        <title>Comparative genomics of 28 Salmonella enterica isolates: evidence for CRISPR-mediated adaptive sublineage evolution.</title>
        <authorList>
            <person name="Fricke W.F."/>
            <person name="Mammel M.K."/>
            <person name="McDermott P.F."/>
            <person name="Tartera C."/>
            <person name="White D.G."/>
            <person name="Leclerc J.E."/>
            <person name="Ravel J."/>
            <person name="Cebula T.A."/>
        </authorList>
    </citation>
    <scope>NUCLEOTIDE SEQUENCE [LARGE SCALE GENOMIC DNA]</scope>
    <source>
        <strain>SL476</strain>
    </source>
</reference>
<sequence length="104" mass="11078">MAAIQGIEGVISQLQATAMAARGQDTHSQSTVSFAGQLHAALDRISDRQAAARVQAEKFTLGEPGIALNDVMADMQKASVSMQMGIQVRNKLVAAYQEVMSMQV</sequence>
<gene>
    <name evidence="1" type="primary">fliE</name>
    <name type="ordered locus">SeHA_C2183</name>
</gene>
<feature type="chain" id="PRO_1000132673" description="Flagellar hook-basal body complex protein FliE">
    <location>
        <begin position="1"/>
        <end position="104"/>
    </location>
</feature>
<keyword id="KW-0975">Bacterial flagellum</keyword>